<sequence>MDTEADLFYRQLPKVELHAHLNGSVSFETMEKLIKRKPHLNIEHSMTAIRRGQRRTLDECFQVFKVIHQLVDSEEDILMVAKSVIQEFAADGVKYLELRSTPREVTETGLSKQRYIETVLEAIRQCKQEGVDIDVRFLVAVDRRHGPEVAMQTVKLAEDFLLSSDGTVVGLDLSGDPTVGHGKDLLAALQKAKNCGLKLALHLSEVPSQIDETELLLNLPPDRIGHGTFLHPDVGGSDSLVDKVCKQNIPIEICLTSNVKGQTVPSYDKHHFKYWYNRGHPCVLCTDDKGVFCTDLSQEYQLAASTFGLTKEAVWILSQQAIGYTFAPEPIKQRLEKTWAELKQQILQ</sequence>
<comment type="function">
    <text evidence="2">Catalyzes the hydrolysis of the free cytosolic methylated adenosine nucleotide N(6)-methyl-AMP (N6-mAMP) to produce inositol monophosphate (IMP) and methylamine. Is required for the catabolism of cytosolic N6-mAMP, which is derived from the degradation of mRNA containing N6-methylated adenine (m6A).</text>
</comment>
<comment type="catalytic activity">
    <reaction evidence="2">
        <text>N(6)-methyl-AMP + H2O + H(+) = IMP + methylamine</text>
        <dbReference type="Rhea" id="RHEA:16001"/>
        <dbReference type="ChEBI" id="CHEBI:15377"/>
        <dbReference type="ChEBI" id="CHEBI:15378"/>
        <dbReference type="ChEBI" id="CHEBI:58053"/>
        <dbReference type="ChEBI" id="CHEBI:59338"/>
        <dbReference type="ChEBI" id="CHEBI:144842"/>
    </reaction>
    <physiologicalReaction direction="left-to-right" evidence="2">
        <dbReference type="Rhea" id="RHEA:16002"/>
    </physiologicalReaction>
</comment>
<comment type="cofactor">
    <cofactor evidence="2">
        <name>Zn(2+)</name>
        <dbReference type="ChEBI" id="CHEBI:29105"/>
    </cofactor>
    <text evidence="2">Binds 1 zinc ion per subunit.</text>
</comment>
<comment type="subunit">
    <text evidence="2">Monomer.</text>
</comment>
<comment type="similarity">
    <text evidence="4">Belongs to the metallo-dependent hydrolases superfamily. Adenosine and AMP deaminases family.</text>
</comment>
<keyword id="KW-0378">Hydrolase</keyword>
<keyword id="KW-0479">Metal-binding</keyword>
<keyword id="KW-0546">Nucleotide metabolism</keyword>
<keyword id="KW-1185">Reference proteome</keyword>
<keyword id="KW-0862">Zinc</keyword>
<feature type="chain" id="PRO_0000285092" description="N6-Methyl-AMP deaminase">
    <location>
        <begin position="1"/>
        <end position="348"/>
    </location>
</feature>
<feature type="active site" description="Proton donor" evidence="1">
    <location>
        <position position="205"/>
    </location>
</feature>
<feature type="binding site" evidence="3">
    <location>
        <position position="18"/>
    </location>
    <ligand>
        <name>Zn(2+)</name>
        <dbReference type="ChEBI" id="CHEBI:29105"/>
        <note>catalytic</note>
    </ligand>
</feature>
<feature type="binding site" evidence="3">
    <location>
        <position position="20"/>
    </location>
    <ligand>
        <name>N(6)-methyl-AMP</name>
        <dbReference type="ChEBI" id="CHEBI:144842"/>
    </ligand>
</feature>
<feature type="binding site" evidence="3">
    <location>
        <position position="20"/>
    </location>
    <ligand>
        <name>Zn(2+)</name>
        <dbReference type="ChEBI" id="CHEBI:29105"/>
        <note>catalytic</note>
    </ligand>
</feature>
<feature type="binding site" evidence="3">
    <location>
        <position position="22"/>
    </location>
    <ligand>
        <name>N(6)-methyl-AMP</name>
        <dbReference type="ChEBI" id="CHEBI:144842"/>
    </ligand>
</feature>
<feature type="binding site" evidence="3">
    <location>
        <position position="68"/>
    </location>
    <ligand>
        <name>N(6)-methyl-AMP</name>
        <dbReference type="ChEBI" id="CHEBI:144842"/>
    </ligand>
</feature>
<feature type="binding site" evidence="3">
    <location>
        <begin position="100"/>
        <end position="103"/>
    </location>
    <ligand>
        <name>N(6)-methyl-AMP</name>
        <dbReference type="ChEBI" id="CHEBI:144842"/>
    </ligand>
</feature>
<feature type="binding site" evidence="3">
    <location>
        <position position="142"/>
    </location>
    <ligand>
        <name>N(6)-methyl-AMP</name>
        <dbReference type="ChEBI" id="CHEBI:144842"/>
    </ligand>
</feature>
<feature type="binding site" evidence="3">
    <location>
        <position position="175"/>
    </location>
    <ligand>
        <name>N(6)-methyl-AMP</name>
        <dbReference type="ChEBI" id="CHEBI:144842"/>
    </ligand>
</feature>
<feature type="binding site" evidence="3">
    <location>
        <position position="202"/>
    </location>
    <ligand>
        <name>Zn(2+)</name>
        <dbReference type="ChEBI" id="CHEBI:29105"/>
        <note>catalytic</note>
    </ligand>
</feature>
<feature type="binding site" evidence="3">
    <location>
        <position position="205"/>
    </location>
    <ligand>
        <name>N(6)-methyl-AMP</name>
        <dbReference type="ChEBI" id="CHEBI:144842"/>
    </ligand>
</feature>
<feature type="binding site" evidence="3">
    <location>
        <position position="287"/>
    </location>
    <ligand>
        <name>N(6)-methyl-AMP</name>
        <dbReference type="ChEBI" id="CHEBI:144842"/>
    </ligand>
</feature>
<feature type="binding site" evidence="3">
    <location>
        <position position="287"/>
    </location>
    <ligand>
        <name>Zn(2+)</name>
        <dbReference type="ChEBI" id="CHEBI:29105"/>
        <note>catalytic</note>
    </ligand>
</feature>
<feature type="binding site" evidence="3">
    <location>
        <position position="288"/>
    </location>
    <ligand>
        <name>N(6)-methyl-AMP</name>
        <dbReference type="ChEBI" id="CHEBI:144842"/>
    </ligand>
</feature>
<feature type="site" description="Important for catalytic activity" evidence="1">
    <location>
        <position position="226"/>
    </location>
</feature>
<feature type="sequence conflict" description="In Ref. 1; AAI52247." evidence="4" ref="1">
    <original>G</original>
    <variation>R</variation>
    <location>
        <position position="279"/>
    </location>
</feature>
<feature type="sequence conflict" description="In Ref. 1; AAI52247." evidence="4" ref="1">
    <original>I</original>
    <variation>R</variation>
    <location>
        <position position="316"/>
    </location>
</feature>
<accession>Q4V9P6</accession>
<accession>A7MCN2</accession>
<gene>
    <name type="primary">mapda</name>
    <name type="synonym">adal</name>
    <name type="ORF">zgc:109912</name>
</gene>
<organism>
    <name type="scientific">Danio rerio</name>
    <name type="common">Zebrafish</name>
    <name type="synonym">Brachydanio rerio</name>
    <dbReference type="NCBI Taxonomy" id="7955"/>
    <lineage>
        <taxon>Eukaryota</taxon>
        <taxon>Metazoa</taxon>
        <taxon>Chordata</taxon>
        <taxon>Craniata</taxon>
        <taxon>Vertebrata</taxon>
        <taxon>Euteleostomi</taxon>
        <taxon>Actinopterygii</taxon>
        <taxon>Neopterygii</taxon>
        <taxon>Teleostei</taxon>
        <taxon>Ostariophysi</taxon>
        <taxon>Cypriniformes</taxon>
        <taxon>Danionidae</taxon>
        <taxon>Danioninae</taxon>
        <taxon>Danio</taxon>
    </lineage>
</organism>
<protein>
    <recommendedName>
        <fullName evidence="2">N6-Methyl-AMP deaminase</fullName>
        <ecNumber evidence="2">3.5.4.-</ecNumber>
    </recommendedName>
    <alternativeName>
        <fullName>Adenosine deaminase-like protein</fullName>
    </alternativeName>
</protein>
<evidence type="ECO:0000250" key="1">
    <source>
        <dbReference type="UniProtKB" id="P03958"/>
    </source>
</evidence>
<evidence type="ECO:0000250" key="2">
    <source>
        <dbReference type="UniProtKB" id="Q6DHV7"/>
    </source>
</evidence>
<evidence type="ECO:0000250" key="3">
    <source>
        <dbReference type="UniProtKB" id="Q8LPL7"/>
    </source>
</evidence>
<evidence type="ECO:0000305" key="4"/>
<proteinExistence type="evidence at transcript level"/>
<name>ADAL_DANRE</name>
<dbReference type="EC" id="3.5.4.-" evidence="2"/>
<dbReference type="EMBL" id="BC096787">
    <property type="protein sequence ID" value="AAH96787.1"/>
    <property type="molecule type" value="mRNA"/>
</dbReference>
<dbReference type="EMBL" id="BC152246">
    <property type="protein sequence ID" value="AAI52247.1"/>
    <property type="molecule type" value="mRNA"/>
</dbReference>
<dbReference type="RefSeq" id="NP_001028916.1">
    <property type="nucleotide sequence ID" value="NM_001033744.1"/>
</dbReference>
<dbReference type="SMR" id="Q4V9P6"/>
<dbReference type="FunCoup" id="Q4V9P6">
    <property type="interactions" value="681"/>
</dbReference>
<dbReference type="STRING" id="7955.ENSDARP00000067287"/>
<dbReference type="PaxDb" id="7955-ENSDARP00000067287"/>
<dbReference type="DNASU" id="619263"/>
<dbReference type="GeneID" id="619263"/>
<dbReference type="KEGG" id="dre:619263"/>
<dbReference type="AGR" id="ZFIN:ZDB-GENE-050913-145"/>
<dbReference type="CTD" id="161823"/>
<dbReference type="ZFIN" id="ZDB-GENE-050913-145">
    <property type="gene designation" value="mapda"/>
</dbReference>
<dbReference type="eggNOG" id="KOG1097">
    <property type="taxonomic scope" value="Eukaryota"/>
</dbReference>
<dbReference type="InParanoid" id="Q4V9P6"/>
<dbReference type="OrthoDB" id="272271at2759"/>
<dbReference type="PhylomeDB" id="Q4V9P6"/>
<dbReference type="Reactome" id="R-DRE-2161541">
    <property type="pathway name" value="Abacavir metabolism"/>
</dbReference>
<dbReference type="Reactome" id="R-DRE-74217">
    <property type="pathway name" value="Purine salvage"/>
</dbReference>
<dbReference type="PRO" id="PR:Q4V9P6"/>
<dbReference type="Proteomes" id="UP000000437">
    <property type="component" value="Alternate scaffold 25"/>
</dbReference>
<dbReference type="Proteomes" id="UP000000437">
    <property type="component" value="Chromosome 25"/>
</dbReference>
<dbReference type="GO" id="GO:0004000">
    <property type="term" value="F:adenosine deaminase activity"/>
    <property type="evidence" value="ECO:0000318"/>
    <property type="project" value="GO_Central"/>
</dbReference>
<dbReference type="GO" id="GO:0046872">
    <property type="term" value="F:metal ion binding"/>
    <property type="evidence" value="ECO:0007669"/>
    <property type="project" value="UniProtKB-KW"/>
</dbReference>
<dbReference type="GO" id="GO:0062154">
    <property type="term" value="F:N6-methyl-AMP deaminase activity"/>
    <property type="evidence" value="ECO:0007669"/>
    <property type="project" value="RHEA"/>
</dbReference>
<dbReference type="GO" id="GO:0006154">
    <property type="term" value="P:adenosine catabolic process"/>
    <property type="evidence" value="ECO:0000318"/>
    <property type="project" value="GO_Central"/>
</dbReference>
<dbReference type="GO" id="GO:0043010">
    <property type="term" value="P:camera-type eye development"/>
    <property type="evidence" value="ECO:0000315"/>
    <property type="project" value="ZFIN"/>
</dbReference>
<dbReference type="GO" id="GO:0046103">
    <property type="term" value="P:inosine biosynthetic process"/>
    <property type="evidence" value="ECO:0000318"/>
    <property type="project" value="GO_Central"/>
</dbReference>
<dbReference type="GO" id="GO:0009117">
    <property type="term" value="P:nucleotide metabolic process"/>
    <property type="evidence" value="ECO:0007669"/>
    <property type="project" value="UniProtKB-KW"/>
</dbReference>
<dbReference type="CDD" id="cd00443">
    <property type="entry name" value="ADA_AMPD"/>
    <property type="match status" value="1"/>
</dbReference>
<dbReference type="FunFam" id="3.20.20.140:FF:000033">
    <property type="entry name" value="Adenosine deaminase-like protein"/>
    <property type="match status" value="1"/>
</dbReference>
<dbReference type="Gene3D" id="3.20.20.140">
    <property type="entry name" value="Metal-dependent hydrolases"/>
    <property type="match status" value="1"/>
</dbReference>
<dbReference type="InterPro" id="IPR001365">
    <property type="entry name" value="A_deaminase_dom"/>
</dbReference>
<dbReference type="InterPro" id="IPR006330">
    <property type="entry name" value="Ado/ade_deaminase"/>
</dbReference>
<dbReference type="InterPro" id="IPR032466">
    <property type="entry name" value="Metal_Hydrolase"/>
</dbReference>
<dbReference type="PANTHER" id="PTHR11409">
    <property type="entry name" value="ADENOSINE DEAMINASE"/>
    <property type="match status" value="1"/>
</dbReference>
<dbReference type="PANTHER" id="PTHR11409:SF42">
    <property type="entry name" value="ADENOSINE DEAMINASE-LIKE PROTEIN"/>
    <property type="match status" value="1"/>
</dbReference>
<dbReference type="Pfam" id="PF00962">
    <property type="entry name" value="A_deaminase"/>
    <property type="match status" value="1"/>
</dbReference>
<dbReference type="SUPFAM" id="SSF51556">
    <property type="entry name" value="Metallo-dependent hydrolases"/>
    <property type="match status" value="1"/>
</dbReference>
<reference key="1">
    <citation type="submission" date="2007-08" db="EMBL/GenBank/DDBJ databases">
        <authorList>
            <consortium name="NIH - Zebrafish Gene Collection (ZGC) project"/>
        </authorList>
    </citation>
    <scope>NUCLEOTIDE SEQUENCE [LARGE SCALE MRNA]</scope>
    <source>
        <tissue>Embryo</tissue>
        <tissue>Olfactory epithelium</tissue>
    </source>
</reference>